<dbReference type="EMBL" id="AL844503">
    <property type="protein sequence ID" value="CAX51862.2"/>
    <property type="molecule type" value="Genomic_DNA"/>
</dbReference>
<dbReference type="RefSeq" id="XP_002808637.1">
    <property type="nucleotide sequence ID" value="XM_002808591.1"/>
</dbReference>
<dbReference type="SMR" id="P86148"/>
<dbReference type="STRING" id="36329.P86148"/>
<dbReference type="GlyCosmos" id="P86148">
    <property type="glycosylation" value="30 sites, No reported glycans"/>
</dbReference>
<dbReference type="PaxDb" id="5833-PFD0110w"/>
<dbReference type="EnsemblProtists" id="CAX51862">
    <property type="protein sequence ID" value="CAX51862"/>
    <property type="gene ID" value="PF3D7_0402300"/>
</dbReference>
<dbReference type="GeneID" id="9221810"/>
<dbReference type="KEGG" id="pfa:PF3D7_0402300"/>
<dbReference type="VEuPathDB" id="PlasmoDB:PF3D7_0402300"/>
<dbReference type="HOGENOM" id="CLU_226794_0_0_1"/>
<dbReference type="InParanoid" id="P86148"/>
<dbReference type="OrthoDB" id="385684at2759"/>
<dbReference type="PhylomeDB" id="P86148"/>
<dbReference type="Proteomes" id="UP000001450">
    <property type="component" value="Chromosome 4"/>
</dbReference>
<dbReference type="GO" id="GO:0020007">
    <property type="term" value="C:apical complex"/>
    <property type="evidence" value="ECO:0000314"/>
    <property type="project" value="GeneDB"/>
</dbReference>
<dbReference type="GO" id="GO:0005923">
    <property type="term" value="C:bicellular tight junction"/>
    <property type="evidence" value="ECO:0007669"/>
    <property type="project" value="UniProtKB-SubCell"/>
</dbReference>
<dbReference type="GO" id="GO:0031410">
    <property type="term" value="C:cytoplasmic vesicle"/>
    <property type="evidence" value="ECO:0007669"/>
    <property type="project" value="UniProtKB-KW"/>
</dbReference>
<dbReference type="GO" id="GO:0005576">
    <property type="term" value="C:extracellular region"/>
    <property type="evidence" value="ECO:0007669"/>
    <property type="project" value="UniProtKB-SubCell"/>
</dbReference>
<dbReference type="GO" id="GO:0016020">
    <property type="term" value="C:membrane"/>
    <property type="evidence" value="ECO:0000303"/>
    <property type="project" value="UniProtKB"/>
</dbReference>
<dbReference type="GO" id="GO:0005739">
    <property type="term" value="C:mitochondrion"/>
    <property type="evidence" value="ECO:0000303"/>
    <property type="project" value="UniProtKB"/>
</dbReference>
<dbReference type="GO" id="GO:0005886">
    <property type="term" value="C:plasma membrane"/>
    <property type="evidence" value="ECO:0007669"/>
    <property type="project" value="UniProtKB-SubCell"/>
</dbReference>
<dbReference type="GO" id="GO:0020008">
    <property type="term" value="C:rhoptry"/>
    <property type="evidence" value="ECO:0000314"/>
    <property type="project" value="GeneDB"/>
</dbReference>
<dbReference type="GO" id="GO:0008201">
    <property type="term" value="F:heparin binding"/>
    <property type="evidence" value="ECO:0000314"/>
    <property type="project" value="GeneDB"/>
</dbReference>
<dbReference type="GO" id="GO:0046789">
    <property type="term" value="F:host cell surface receptor binding"/>
    <property type="evidence" value="ECO:0000314"/>
    <property type="project" value="GeneDB"/>
</dbReference>
<dbReference type="GO" id="GO:0098609">
    <property type="term" value="P:cell-cell adhesion"/>
    <property type="evidence" value="ECO:0000314"/>
    <property type="project" value="GeneDB"/>
</dbReference>
<feature type="signal peptide" evidence="1">
    <location>
        <begin position="1"/>
        <end position="20"/>
    </location>
</feature>
<feature type="chain" id="PRO_0000361077" description="Reticulocyte-binding protein homolog 1" evidence="1">
    <location>
        <begin position="21"/>
        <end position="2971"/>
    </location>
</feature>
<feature type="chain" id="PRO_0000453520" description="Reticulocyte-binding protein homolog 1 240 kDa form" evidence="15">
    <location>
        <begin position="21"/>
        <end status="unknown"/>
    </location>
</feature>
<feature type="chain" id="PRO_0000453521" description="Reticulocyte-binding protein homolog 1 120 kDa form" evidence="15">
    <location>
        <begin status="unknown"/>
        <end position="2971"/>
    </location>
</feature>
<feature type="topological domain" description="Extracellular" evidence="15">
    <location>
        <begin position="21"/>
        <end position="2897"/>
    </location>
</feature>
<feature type="transmembrane region" description="Helical" evidence="1">
    <location>
        <begin position="2898"/>
        <end position="2918"/>
    </location>
</feature>
<feature type="topological domain" description="Cytoplasmic" evidence="15">
    <location>
        <begin position="2919"/>
        <end position="2971"/>
    </location>
</feature>
<feature type="repeat" description="LRR 1" evidence="1">
    <location>
        <begin position="528"/>
        <end position="553"/>
    </location>
</feature>
<feature type="repeat" description="LRR 2" evidence="1">
    <location>
        <begin position="607"/>
        <end position="633"/>
    </location>
</feature>
<feature type="repeat" description="LRR 3" evidence="1">
    <location>
        <begin position="736"/>
        <end position="758"/>
    </location>
</feature>
<feature type="repeat" description="LRR 4" evidence="1">
    <location>
        <begin position="785"/>
        <end position="808"/>
    </location>
</feature>
<feature type="repeat" description="LRR 5" evidence="1">
    <location>
        <begin position="993"/>
        <end position="1018"/>
    </location>
</feature>
<feature type="repeat" description="LRR 6" evidence="1">
    <location>
        <begin position="1356"/>
        <end position="1381"/>
    </location>
</feature>
<feature type="repeat" description="LRR 7" evidence="1">
    <location>
        <begin position="1466"/>
        <end position="1489"/>
    </location>
</feature>
<feature type="repeat" description="LRR 8" evidence="1">
    <location>
        <begin position="1512"/>
        <end position="1537"/>
    </location>
</feature>
<feature type="repeat" description="LRR 9" evidence="1">
    <location>
        <begin position="1586"/>
        <end position="1609"/>
    </location>
</feature>
<feature type="repeat" description="LRR 10" evidence="1">
    <location>
        <begin position="1611"/>
        <end position="1636"/>
    </location>
</feature>
<feature type="repeat" description="LRR 11" evidence="1">
    <location>
        <begin position="1700"/>
        <end position="1723"/>
    </location>
</feature>
<feature type="repeat" description="LRR 12" evidence="1">
    <location>
        <begin position="1809"/>
        <end position="1834"/>
    </location>
</feature>
<feature type="repeat" description="LRR 13" evidence="1">
    <location>
        <begin position="1880"/>
        <end position="1903"/>
    </location>
</feature>
<feature type="repeat" description="LRR 14" evidence="1">
    <location>
        <begin position="1944"/>
        <end position="1967"/>
    </location>
</feature>
<feature type="repeat" description="LRR 15" evidence="1">
    <location>
        <begin position="2523"/>
        <end position="2548"/>
    </location>
</feature>
<feature type="repeat" description="LRR 16" evidence="1">
    <location>
        <begin position="2731"/>
        <end position="2754"/>
    </location>
</feature>
<feature type="region of interest" description="Disordered" evidence="3">
    <location>
        <begin position="30"/>
        <end position="50"/>
    </location>
</feature>
<feature type="region of interest" description="Erythrocyte binding domain (EBD)" evidence="9">
    <location>
        <begin position="500"/>
        <end position="833"/>
    </location>
</feature>
<feature type="region of interest" description="Disordered" evidence="3">
    <location>
        <begin position="2773"/>
        <end position="2825"/>
    </location>
</feature>
<feature type="region of interest" description="Disordered" evidence="3">
    <location>
        <begin position="2840"/>
        <end position="2862"/>
    </location>
</feature>
<feature type="compositionally biased region" description="Basic and acidic residues" evidence="3">
    <location>
        <begin position="2773"/>
        <end position="2782"/>
    </location>
</feature>
<feature type="compositionally biased region" description="Basic and acidic residues" evidence="3">
    <location>
        <begin position="2795"/>
        <end position="2804"/>
    </location>
</feature>
<feature type="compositionally biased region" description="Basic and acidic residues" evidence="3">
    <location>
        <begin position="2814"/>
        <end position="2825"/>
    </location>
</feature>
<feature type="glycosylation site" description="N-linked (GlcNAc...) asparagine" evidence="2">
    <location>
        <position position="70"/>
    </location>
</feature>
<feature type="glycosylation site" description="N-linked (GlcNAc...) asparagine" evidence="2">
    <location>
        <position position="78"/>
    </location>
</feature>
<feature type="glycosylation site" description="N-linked (GlcNAc...) asparagine" evidence="2">
    <location>
        <position position="87"/>
    </location>
</feature>
<feature type="glycosylation site" description="N-linked (GlcNAc...) asparagine" evidence="2">
    <location>
        <position position="135"/>
    </location>
</feature>
<feature type="glycosylation site" description="N-linked (GlcNAc...) asparagine" evidence="2">
    <location>
        <position position="286"/>
    </location>
</feature>
<feature type="glycosylation site" description="N-linked (GlcNAc...) asparagine" evidence="2">
    <location>
        <position position="384"/>
    </location>
</feature>
<feature type="glycosylation site" description="N-linked (GlcNAc...) asparagine" evidence="2">
    <location>
        <position position="417"/>
    </location>
</feature>
<feature type="glycosylation site" description="N-linked (GlcNAc...) asparagine" evidence="2">
    <location>
        <position position="685"/>
    </location>
</feature>
<feature type="glycosylation site" description="N-linked (GlcNAc...) asparagine" evidence="2">
    <location>
        <position position="830"/>
    </location>
</feature>
<feature type="glycosylation site" description="N-linked (GlcNAc...) asparagine" evidence="2">
    <location>
        <position position="892"/>
    </location>
</feature>
<feature type="glycosylation site" description="N-linked (GlcNAc...) asparagine" evidence="2">
    <location>
        <position position="1000"/>
    </location>
</feature>
<feature type="glycosylation site" description="N-linked (GlcNAc...) asparagine" evidence="2">
    <location>
        <position position="1010"/>
    </location>
</feature>
<feature type="glycosylation site" description="N-linked (GlcNAc...) asparagine" evidence="2">
    <location>
        <position position="1425"/>
    </location>
</feature>
<feature type="glycosylation site" description="N-linked (GlcNAc...) asparagine" evidence="2">
    <location>
        <position position="1496"/>
    </location>
</feature>
<feature type="glycosylation site" description="N-linked (GlcNAc...) asparagine" evidence="2">
    <location>
        <position position="1664"/>
    </location>
</feature>
<feature type="glycosylation site" description="N-linked (GlcNAc...) asparagine" evidence="2">
    <location>
        <position position="1692"/>
    </location>
</feature>
<feature type="glycosylation site" description="N-linked (GlcNAc...) asparagine" evidence="2">
    <location>
        <position position="1718"/>
    </location>
</feature>
<feature type="glycosylation site" description="N-linked (GlcNAc...) asparagine" evidence="2">
    <location>
        <position position="1816"/>
    </location>
</feature>
<feature type="glycosylation site" description="N-linked (GlcNAc...) asparagine" evidence="2">
    <location>
        <position position="1844"/>
    </location>
</feature>
<feature type="glycosylation site" description="N-linked (GlcNAc...) asparagine" evidence="2">
    <location>
        <position position="1913"/>
    </location>
</feature>
<feature type="glycosylation site" description="N-linked (GlcNAc...) asparagine" evidence="2">
    <location>
        <position position="1918"/>
    </location>
</feature>
<feature type="glycosylation site" description="N-linked (GlcNAc...) asparagine" evidence="2">
    <location>
        <position position="2054"/>
    </location>
</feature>
<feature type="glycosylation site" description="N-linked (GlcNAc...) asparagine" evidence="2">
    <location>
        <position position="2207"/>
    </location>
</feature>
<feature type="glycosylation site" description="N-linked (GlcNAc...) asparagine" evidence="2">
    <location>
        <position position="2289"/>
    </location>
</feature>
<feature type="glycosylation site" description="N-linked (GlcNAc...) asparagine" evidence="2">
    <location>
        <position position="2300"/>
    </location>
</feature>
<feature type="glycosylation site" description="N-linked (GlcNAc...) asparagine" evidence="2">
    <location>
        <position position="2338"/>
    </location>
</feature>
<feature type="glycosylation site" description="N-linked (GlcNAc...) asparagine" evidence="2">
    <location>
        <position position="2405"/>
    </location>
</feature>
<feature type="glycosylation site" description="N-linked (GlcNAc...) asparagine" evidence="2">
    <location>
        <position position="2598"/>
    </location>
</feature>
<feature type="glycosylation site" description="N-linked (GlcNAc...) asparagine" evidence="2">
    <location>
        <position position="2752"/>
    </location>
</feature>
<feature type="glycosylation site" description="N-linked (GlcNAc...) asparagine" evidence="2">
    <location>
        <position position="2811"/>
    </location>
</feature>
<comment type="function">
    <molecule>Reticulocyte-binding protein homolog 1 240 kDa form</molecule>
    <text evidence="4 9 11">During the asexual blood stage, binds to a sialic acid containing receptor on the surface of the host erythrocyte and thus is involved in merozoite invasion (PubMed:18617995). Binds erythrocytes via a neuraminidase sensitive and trypsin-, chymotrypsin-resistant receptor (PubMed:11733572, PubMed:18617995). After merozoite attachment and reorientation, RH1 binding to its erythrocyte receptor triggers an increase in intracellular Ca(2+) within the parasite resulting in the release of microneme proteins such as EBA175 which in turn leads to the formation of the tight junction between parasite and host cell (PubMed:24280897).</text>
</comment>
<comment type="subunit">
    <molecule>Reticulocyte-binding protein homolog 1 240 kDa form</molecule>
    <text evidence="12">May in part interact with AMA1 in the moving tight junction between the parasite and the erythrocyte membranes; the interaction may facilitate junction formation and active invasion.</text>
</comment>
<comment type="subcellular location">
    <molecule>Reticulocyte-binding protein homolog 1</molecule>
    <subcellularLocation>
        <location evidence="16">Cell membrane</location>
        <topology evidence="15">Single-pass type I membrane protein</topology>
    </subcellularLocation>
    <text evidence="5">Localizes to apical organelles in the maturing schizont and then translocates to the apical surface of the merozoite.</text>
</comment>
<comment type="subcellular location">
    <molecule>Reticulocyte-binding protein homolog 1 240 kDa form</molecule>
    <subcellularLocation>
        <location evidence="10">Secreted</location>
    </subcellularLocation>
    <subcellularLocation>
        <location evidence="10">Cell junction</location>
        <location evidence="10">Tight junction</location>
    </subcellularLocation>
    <subcellularLocation>
        <location evidence="10 12">Cytoplasmic vesicle</location>
        <location evidence="10 12">Secretory vesicle</location>
        <location evidence="10 12">Rhoptry</location>
    </subcellularLocation>
    <text evidence="10 12">Localized to the rhoptry neck at the apical end of the merozoite (PubMed:19614665, PubMed:32452132). During merozoite invasion, mainly localizes to the tight junction formed between the parasite and the host erythrocytes membranes and then moves with the tight junction to the posterior end as the parasite enters the erythrocyte (PubMed:19614665). The remaining protein that does not participate in the tight junction, remains at the apical end of the merozoite and is incorporated into the newly formed ring stage (PubMed:19614665).</text>
</comment>
<comment type="subcellular location">
    <molecule>Reticulocyte-binding protein homolog 1 120 kDa form</molecule>
    <subcellularLocation>
        <location evidence="10">Cell membrane</location>
        <topology evidence="15">Single-pass type I membrane protein</topology>
    </subcellularLocation>
    <subcellularLocation>
        <location evidence="10 12">Cell junction</location>
        <location evidence="10 12">Tight junction</location>
    </subcellularLocation>
    <subcellularLocation>
        <location evidence="10 12">Cytoplasmic vesicle</location>
        <location evidence="10 12">Secretory vesicle</location>
        <location evidence="10 12">Rhoptry</location>
    </subcellularLocation>
    <text evidence="10 12">Localized to the rhoptry neck at the apical end of the merozoite (PubMed:19614665, PubMed:32452132). During merozoite invasion, mainly localizes to the tight junction formed between the parasite and the host erythrocytes membranes and then moves with the tight junction to the posterior end as the parasite enters the erythrocyte (PubMed:19614665). The remaining protein that does not participate in the tight junction, remains at the apical end of the merozoite and is incorporated into the newly formed ring stage (PubMed:19614665).</text>
</comment>
<comment type="developmental stage">
    <text evidence="4 5 6 9">Expressed during parasite asexual blood stages, specifically at the late schizont stage prior to merozoite release and in free merozoites (at protein level) (PubMed:11733572, PubMed:12228308, PubMed:15612925). Expression levels are low in isolate 3D7 when compared to other isolates (at protein level) (PubMed:12228308, PubMed:15612925, PubMed:18617995).</text>
</comment>
<comment type="PTM">
    <text evidence="5 6 7 10 12">Proteolytically processed into multiple fragments following schizont rupture (PubMed:19614665, PubMed:32452132). In the mature schizont stage prior to merozoite release, full length RH1 is processed post-Golgi into a 240 kDa N-terminal form and a 120 kDa C-terminal form containing the transmembrane region (PubMed:12228308, PubMed:15612925, PubMed:19614665, PubMed:32452132). Both forms appear not to form a complex (PubMed:19614665). However, they appear to remain in close proximity in late schizonts (PubMed:32452132). Following merozoite invasion of host erythrocytes, the 240 kDa form is further processed into a 140 kDa form which may be involved in the disengagement of the ligand-receptor complex required during the invasion process (PubMed:19614665, PubMed:32452132). Also, the 120 kDa is further cleaved into a 110 kDa form and a transmembrane 9 kDa form probably by ROM4 (PubMed:17040128, PubMed:19614665, PubMed:32452132).</text>
</comment>
<comment type="disruption phenotype">
    <text evidence="6">No difference in the ability to invade neuraminidase-, trypsin or chymotrypsin-treated host erythrocytes compared with wild-type.</text>
</comment>
<comment type="biotechnology">
    <text evidence="8 9 11">Possible candidate for an effective malaria vaccine as determined by epitope response in sera (PubMed:17653272). Antibodies against the erythrocyte binding domain (EBD) prevent merozoite invasion of host erythrocytes (PubMed:18617995, PubMed:24280897). However, inhibition efficiency varies across isolates due to the variation in RH1 expression levels and can also be affected by the expression levels of RH2a and/or RH2b, two other erythrocyte binding receptors (PubMed:18617995). Isolates 3D7 or HB3 are insensitive to antibodies against EBD while isolates W2mef, T994, FCR3 and Dd2 are sensitive (PubMed:18617995, PubMed:24280897).</text>
</comment>
<comment type="miscellaneous">
    <text evidence="5 6 9 15 16 17">RH1 expression levels greatly vary between isolates in part due to multiple RH1 gene copies; levels are high in isolates W2mef, FCR3, FCB1 and T994, and low in isolates 3D7, HB3, K1, 7G8, T996 and Dd2 (PubMed:12228308, PubMed:15612925, PubMed:18617995). A similar variation in expression affects other reticulocyte-binding proteins such as RH2a and RH2b (PubMed:12228308). The expression pattern of RH1 and RH2 allows the strain to use different invasion pathways to enter erythrocytes (Probable). This provides a mechanism of phenotypic variation to evade host immune responses and to adapt to the polymorphic nature of the erythrocyte receptors in human populations (Probable).</text>
</comment>
<sequence length="2971" mass="357669">MQRWIFCNIVLHILIYLAEFSHEQESYSSNEKIRKDYSDDNNYEPTPSYEKRKKEYGKDESYIKNYRGNNFSYDLSKNSSIFLHMGNGSNSKTLKRCNKKKNIKTNFLRPIEEEKTVLNNYVYKGVNFLDTIKRNDSSYKFDVYKDTSFLKNREYKELITMQYDYAYLEATKEVLYLIPKDKDYHKFYKNELEKILFNLKDSLKLLREGYIQSKLEMIRIHSDIDILNEFHQGNIINDNYFNNEIKKKKEDMEKYIREYNLYIYKYENQLKIKIQKLTNEVSINLNKSTCEKNCYNYILKLEKYKNIIKDKINKWKDLPEIYIDDKSFSYTFLKDVINNKIDIYKTISSFISTQKQLYYFEYIYIMNKNTLNLLSYNIQKTDINSSSKYTYTKSHFLKDNHILLSKYYTAKFIDILNKTYYYNLYKNKILLFNKYIIKLRNDLKEYAFKSIQFIQDKIKKHKDELSIENILQEVNNIYIKYDTSINEISKYNNLIINTDLQIVQQKLLEIKQKKNDITHKVQLINHIYKNIHDEILNKKNNEITKIIINNIKDHKKDLQDLLLFIQQIKQYNILTDHKITQCNNYYKEIIKMKEDINHIHIYIQPILNNLHTLKQVQNNKIKYEEHIKQILQKIYDKKESLKKIILLKDEAQLDITLLDDLIQKQTKKQTQTQTQTQKQTLIQNNETIQLISGQEDKHESNPFNHIQTYIQQKDTQNKNIQNLLKSLYNGNINTFIDTISKYILKQKDIELTQHVYTDEKINDYLEEIKNEQNKIDKTIDDIKIQETLKQITHIVNNIKTIKKDLLKEFIQHLIKYMNERYQNMQQGYNNLTNYINQYEEENNNMKQYITTIRNIQKIYYDNIYAKEKEIRSGQYYKDFITSRKNIYNIRENISKNVDMIKNEEKKKIQNCVDKYNSIKQYVKMLKNGDTQDENNNNNNDIYDKLIVPLDSIKQNIDKYNTEHNFITFTNKINTHNKKNQEMMEEFIYAYKRLKILKILNISLKACEKNNKSINTLNDKTQELKKIVTHEIDLLQKDILTSQISNKNVLLLNDLLKEIEQYIIDVHKLKKKSNDLFTYYEQSKNYFYFKNKKDNFDIQKTINKMNEWLAIKNYINEINKNYQTLYEKKINVLLHNSKSYVQYFYDHIINLILQKKNYLENTLKTKIQDNEHSLYALQQNEEYQKVKNEKDQNEIKKIKQLIEKNKNDILTYENNIEQIEQKNIELKTNAQNKDDQIVNTLNEVKKKIIYTYEKVDNQISNVLKNYEEGKVEYDKNVVQNVNDADDTNDIDEINDIDEINDIDEINDIDEINDIDEIKDIDHIKHFDDTKHFDDIYHADDTRDEYHIALSNYIKTELRNINLQEIKNNIIKIFKEFKSAHKEIKKESEQINKEFTKMDVVINQLRDIDRQMLDLYKELDEKYSEFNKTKIEEINNIRENINNVEIWYEKNIIEYFLRHMNDQKDKAAKYMENIDTYKNNIEIISKQINPENYVETLNKSNMYSYVEKANDLFYKQINNIIINSNQLKNEAFTIDELQNIQKNRKNLLTKKQQIIQYTNEIENIFNEIKNINNILVLTNYKSILQDISQNINHVSIYTEQLHNLYIKLEEEKEQMKTLYHKSNVLHNQINFNEDAFINNLLINIEKIKNDITHIKEKTNIYMIDVNKSKNNAQLYFHNTLRGNEKIEYLKNLKNSTNQQITLQELKQVQENVEKVKDIYNQTIKYEEEIKKNYHIITDYENKINDILHNSFIKQINMESSNNKKQTKQIIDIINDKTFEEHIKTSKTKINMLKEQSQMKHIDKTLLNEQALKLFVDINSTNNNLDNMLSEINSIQNNIHTYIQEANKSFDKFKIICDQNVNDLLNKLSLGDLNYMNHLKNLQNEIRNMNLEKNFMLDKSKKIDEEEKKLDILKVNISNINNSLDKLKKYYEEALFQKVKEKAEIQKENIEKIKQEINTLSDVFKKPFFFIQLNTDSSQHEKDINNNVETYKNNIDEIYNVFIQSYNLIQKYSSEIFSSTLNYIQTKEIKEKSIKEQNQLNQNEKEASVLLKNIKINETIKLFKQIKNERQNDVHNIKEDYNLLQQYLNYMKNEMEQLKKYKNDVHMDKNYVENNNGEKEKLLKETISSYYDKINNINNKLYIYKNKEDTYFNNMIKVSEILNIIIKKKQQNEQRIVINAEYDSSLINKDEEIKKEINNQIIELNKHNENISNIFKDIQNIKKQSQDIITNMNDMYKSTILLVDIIQKKEEALNKQKNILRNIDNILNKKENIIDKVIKCNCDDYKDILIQNETEYQKLQNINHTYEEKKKSIDILKIKNIKQKNIQEYKNKLEQMNTIINQSIEQHVFINADILQNEKIKLEEIIKNLDILDEQIMTYHNSIDELYKLGIQCDNHLITTISVVVNKNTTKIMIHIKKQKEDIQKINNYIQTNYNIINEEALQFHRLYGHNLISEDDKNNLVHIIKEQKNIYTQKEIDISKIIKHVKKGLYSLNEHDMNHDTHMNIINEHINNNILQPYTQLINMIKDIDNVFIKIQNNKFEQIQKYIEIIKSLEQLNKNINTDNLNKLKDTQNKLINIETEMKHKQKQLINKMNDIEKDNITDQYMHDVQQNIFEPITLKMNEYNTLLNDNHNNNINNEHQFNHLNSLHTKIFSHNYNKEQQQEYITNIMQRIDVFINDLDTYQYEYYFYEWNQEYKQIDKNKINQHINNIKNNLIHVKKQFEHTLENIKNNENIFDNIQLKKKDIDDIIININNTKETYLKELNKKKMLQNKKKVDEKSEINNHHTLQHDNQNVEQKNKIKDHNLITKPNNNSSEESHQNEQMKEQNKNILEKQTRNIKPHHVHNHNHNHNQNQKDSTKLQEQDISTHKLHNTIHEQQSKDNHQGNREKKQKNGNHERMYFASGIVVSILFLSSLGFVINSKNNKQEYDKEQEKQQQNDFVCDNNKMDDKSTQKYGRNQEEVMEISFDNDYI</sequence>
<name>RH1_PLAF7</name>
<accession>P86148</accession>
<accession>B9ZSJ4</accession>
<organism evidence="18">
    <name type="scientific">Plasmodium falciparum (isolate 3D7)</name>
    <dbReference type="NCBI Taxonomy" id="36329"/>
    <lineage>
        <taxon>Eukaryota</taxon>
        <taxon>Sar</taxon>
        <taxon>Alveolata</taxon>
        <taxon>Apicomplexa</taxon>
        <taxon>Aconoidasida</taxon>
        <taxon>Haemosporida</taxon>
        <taxon>Plasmodiidae</taxon>
        <taxon>Plasmodium</taxon>
        <taxon>Plasmodium (Laverania)</taxon>
    </lineage>
</organism>
<gene>
    <name evidence="14" type="primary">RH1</name>
    <name evidence="13" type="synonym">NBP1</name>
    <name type="ORF">PF3D7_0402300</name>
    <name type="ORF">PFD0110w</name>
</gene>
<evidence type="ECO:0000255" key="1"/>
<evidence type="ECO:0000255" key="2">
    <source>
        <dbReference type="PROSITE-ProRule" id="PRU00498"/>
    </source>
</evidence>
<evidence type="ECO:0000256" key="3">
    <source>
        <dbReference type="SAM" id="MobiDB-lite"/>
    </source>
</evidence>
<evidence type="ECO:0000269" key="4">
    <source>
    </source>
</evidence>
<evidence type="ECO:0000269" key="5">
    <source>
    </source>
</evidence>
<evidence type="ECO:0000269" key="6">
    <source>
    </source>
</evidence>
<evidence type="ECO:0000269" key="7">
    <source>
    </source>
</evidence>
<evidence type="ECO:0000269" key="8">
    <source>
    </source>
</evidence>
<evidence type="ECO:0000269" key="9">
    <source>
    </source>
</evidence>
<evidence type="ECO:0000269" key="10">
    <source>
    </source>
</evidence>
<evidence type="ECO:0000269" key="11">
    <source>
    </source>
</evidence>
<evidence type="ECO:0000269" key="12">
    <source>
    </source>
</evidence>
<evidence type="ECO:0000303" key="13">
    <source>
    </source>
</evidence>
<evidence type="ECO:0000303" key="14">
    <source>
    </source>
</evidence>
<evidence type="ECO:0000305" key="15"/>
<evidence type="ECO:0000305" key="16">
    <source>
    </source>
</evidence>
<evidence type="ECO:0000305" key="17">
    <source>
    </source>
</evidence>
<evidence type="ECO:0000312" key="18">
    <source>
        <dbReference type="Proteomes" id="UP000001450"/>
    </source>
</evidence>
<reference evidence="18" key="1">
    <citation type="journal article" date="2002" name="Nature">
        <title>Genome sequence of the human malaria parasite Plasmodium falciparum.</title>
        <authorList>
            <person name="Gardner M.J."/>
            <person name="Hall N."/>
            <person name="Fung E."/>
            <person name="White O."/>
            <person name="Berriman M."/>
            <person name="Hyman R.W."/>
            <person name="Carlton J.M."/>
            <person name="Pain A."/>
            <person name="Nelson K.E."/>
            <person name="Bowman S."/>
            <person name="Paulsen I.T."/>
            <person name="James K.D."/>
            <person name="Eisen J.A."/>
            <person name="Rutherford K.M."/>
            <person name="Salzberg S.L."/>
            <person name="Craig A."/>
            <person name="Kyes S."/>
            <person name="Chan M.-S."/>
            <person name="Nene V."/>
            <person name="Shallom S.J."/>
            <person name="Suh B."/>
            <person name="Peterson J."/>
            <person name="Angiuoli S."/>
            <person name="Pertea M."/>
            <person name="Allen J."/>
            <person name="Selengut J."/>
            <person name="Haft D."/>
            <person name="Mather M.W."/>
            <person name="Vaidya A.B."/>
            <person name="Martin D.M.A."/>
            <person name="Fairlamb A.H."/>
            <person name="Fraunholz M.J."/>
            <person name="Roos D.S."/>
            <person name="Ralph S.A."/>
            <person name="McFadden G.I."/>
            <person name="Cummings L.M."/>
            <person name="Subramanian G.M."/>
            <person name="Mungall C."/>
            <person name="Venter J.C."/>
            <person name="Carucci D.J."/>
            <person name="Hoffman S.L."/>
            <person name="Newbold C."/>
            <person name="Davis R.W."/>
            <person name="Fraser C.M."/>
            <person name="Barrell B.G."/>
        </authorList>
    </citation>
    <scope>NUCLEOTIDE SEQUENCE [LARGE SCALE GENOMIC DNA]</scope>
    <source>
        <strain evidence="18">3D7</strain>
    </source>
</reference>
<reference evidence="18" key="2">
    <citation type="journal article" date="2002" name="Nature">
        <title>Sequence of Plasmodium falciparum chromosomes 1, 3-9 and 13.</title>
        <authorList>
            <person name="Hall N."/>
            <person name="Pain A."/>
            <person name="Berriman M."/>
            <person name="Churcher C.M."/>
            <person name="Harris B."/>
            <person name="Harris D."/>
            <person name="Mungall K.L."/>
            <person name="Bowman S."/>
            <person name="Atkin R."/>
            <person name="Baker S."/>
            <person name="Barron A."/>
            <person name="Brooks K."/>
            <person name="Buckee C.O."/>
            <person name="Burrows C."/>
            <person name="Cherevach I."/>
            <person name="Chillingworth C."/>
            <person name="Chillingworth T."/>
            <person name="Christodoulou Z."/>
            <person name="Clark L."/>
            <person name="Clark R."/>
            <person name="Corton C."/>
            <person name="Cronin A."/>
            <person name="Davies R.M."/>
            <person name="Davis P."/>
            <person name="Dear P."/>
            <person name="Dearden F."/>
            <person name="Doggett J."/>
            <person name="Feltwell T."/>
            <person name="Goble A."/>
            <person name="Goodhead I."/>
            <person name="Gwilliam R."/>
            <person name="Hamlin N."/>
            <person name="Hance Z."/>
            <person name="Harper D."/>
            <person name="Hauser H."/>
            <person name="Hornsby T."/>
            <person name="Holroyd S."/>
            <person name="Horrocks P."/>
            <person name="Humphray S."/>
            <person name="Jagels K."/>
            <person name="James K.D."/>
            <person name="Johnson D."/>
            <person name="Kerhornou A."/>
            <person name="Knights A."/>
            <person name="Konfortov B."/>
            <person name="Kyes S."/>
            <person name="Larke N."/>
            <person name="Lawson D."/>
            <person name="Lennard N."/>
            <person name="Line A."/>
            <person name="Maddison M."/>
            <person name="Mclean J."/>
            <person name="Mooney P."/>
            <person name="Moule S."/>
            <person name="Murphy L."/>
            <person name="Oliver K."/>
            <person name="Ormond D."/>
            <person name="Price C."/>
            <person name="Quail M.A."/>
            <person name="Rabbinowitsch E."/>
            <person name="Rajandream M.A."/>
            <person name="Rutter S."/>
            <person name="Rutherford K.M."/>
            <person name="Sanders M."/>
            <person name="Simmonds M."/>
            <person name="Seeger K."/>
            <person name="Sharp S."/>
            <person name="Smith R."/>
            <person name="Squares R."/>
            <person name="Squares S."/>
            <person name="Stevens K."/>
            <person name="Taylor K."/>
            <person name="Tivey A."/>
            <person name="Unwin L."/>
            <person name="Whitehead S."/>
            <person name="Woodward J.R."/>
            <person name="Sulston J.E."/>
            <person name="Craig A."/>
            <person name="Newbold C."/>
            <person name="Barrell B.G."/>
        </authorList>
    </citation>
    <scope>NUCLEOTIDE SEQUENCE [LARGE SCALE GENOMIC DNA]</scope>
    <source>
        <strain evidence="18">3D7</strain>
    </source>
</reference>
<reference key="3">
    <citation type="journal article" date="2001" name="J. Exp. Med.">
        <title>A Plasmodium falciparum homologue of Plasmodium vivax reticulocyte binding protein (PvRBP1) defines a trypsin-resistant erythrocyte invasion pathway.</title>
        <authorList>
            <person name="Rayner J.C."/>
            <person name="Vargas-Serrato E."/>
            <person name="Huber C.S."/>
            <person name="Galinski M.R."/>
            <person name="Barnwell J.W."/>
        </authorList>
    </citation>
    <scope>FUNCTION</scope>
    <scope>DEVELOPMENTAL STAGE</scope>
</reference>
<reference key="4">
    <citation type="journal article" date="2002" name="Infect. Immun.">
        <title>Variation in the expression of a Plasmodium falciparum protein family implicated in erythrocyte invasion.</title>
        <authorList>
            <person name="Taylor H.M."/>
            <person name="Grainger M."/>
            <person name="Holder A.A."/>
        </authorList>
    </citation>
    <scope>DEVELOPMENTAL STAGE</scope>
    <scope>SUBCELLULAR LOCATION</scope>
    <scope>PROTEOLYTIC CLEAVAGE</scope>
    <source>
        <strain evidence="5">3D7</strain>
        <strain evidence="5">FCB1</strain>
        <strain evidence="5">T996</strain>
    </source>
</reference>
<reference key="5">
    <citation type="journal article" date="2005" name="Mol. Microbiol.">
        <title>Reticulocyte-binding protein homologue 1 is required for sialic acid-dependent invasion into human erythrocytes by Plasmodium falciparum.</title>
        <authorList>
            <person name="Triglia T."/>
            <person name="Duraisingh M.T."/>
            <person name="Good R.T."/>
            <person name="Cowman A.F."/>
        </authorList>
    </citation>
    <scope>DEVELOPMENTAL STAGE</scope>
    <scope>PROTEOLYTIC CLEAVAGE</scope>
    <scope>DISRUPTION PHENOTYPE</scope>
</reference>
<reference key="6">
    <citation type="journal article" date="2006" name="PLoS Pathog.">
        <title>Two Plasmodium rhomboid proteases preferentially cleave different adhesins implicated in all invasive stages of malaria.</title>
        <authorList>
            <person name="Baker R.P."/>
            <person name="Wijetilaka R."/>
            <person name="Urban S."/>
        </authorList>
    </citation>
    <scope>PROTEOLYTIC CLEAVAGE</scope>
</reference>
<reference evidence="15" key="7">
    <citation type="journal article" date="2007" name="PLoS ONE">
        <title>Rapid identification of malaria vaccine candidates based on alpha-helical coiled coil protein motif.</title>
        <authorList>
            <person name="Villard V."/>
            <person name="Agak G.W."/>
            <person name="Frank G."/>
            <person name="Jafarshad A."/>
            <person name="Servis C."/>
            <person name="Nebie I."/>
            <person name="Sirima S.B."/>
            <person name="Felger I."/>
            <person name="Arevalo-Herrera M."/>
            <person name="Herrera S."/>
            <person name="Heitz F."/>
            <person name="Baecker V."/>
            <person name="Druilhe P."/>
            <person name="Kajava A.V."/>
            <person name="Corradin G."/>
        </authorList>
    </citation>
    <scope>SYNTHESIS OF 758-782; 813-839; 1396-1420; 1814-1840; 1904-1957; 2070-2096; 2208-2232 AND 2359-2383</scope>
    <scope>POSSIBLE CANDIDATE MALARIA EPITOPE</scope>
</reference>
<reference key="8">
    <citation type="journal article" date="2008" name="PLoS Pathog.">
        <title>Antibodies targeting the PfRH1 binding domain inhibit invasion of Plasmodium falciparum merozoites.</title>
        <authorList>
            <person name="Gao X."/>
            <person name="Yeo K.P."/>
            <person name="Aw S.S."/>
            <person name="Kuss C."/>
            <person name="Iyer J.K."/>
            <person name="Genesan S."/>
            <person name="Rajamanonmani R."/>
            <person name="Lescar J."/>
            <person name="Bozdech Z."/>
            <person name="Preiser P.R."/>
        </authorList>
    </citation>
    <scope>FUNCTION</scope>
    <scope>DEVELOPMENTAL STAGE</scope>
    <scope>BIOTECHNOLOGY</scope>
</reference>
<reference key="9">
    <citation type="journal article" date="2009" name="Cell. Microbiol.">
        <title>Reticulocyte binding protein homologues are key adhesins during erythrocyte invasion by Plasmodium falciparum.</title>
        <authorList>
            <person name="Triglia T."/>
            <person name="Tham W.H."/>
            <person name="Hodder A."/>
            <person name="Cowman A.F."/>
        </authorList>
    </citation>
    <scope>SUBCELLULAR LOCATION</scope>
    <scope>PROTEOLYTIC CLEAVAGE</scope>
    <source>
        <strain evidence="10">FCR3</strain>
        <strain evidence="10">W2mef</strain>
    </source>
</reference>
<reference key="10">
    <citation type="journal article" date="2013" name="Nat. Commun.">
        <title>Triggers of key calcium signals during erythrocyte invasion by Plasmodium falciparum.</title>
        <authorList>
            <person name="Gao X."/>
            <person name="Gunalan K."/>
            <person name="Yap S.S."/>
            <person name="Preiser P.R."/>
        </authorList>
    </citation>
    <scope>FUNCTION</scope>
    <scope>BIOTECHNOLOGY</scope>
    <source>
        <strain evidence="11">T994</strain>
    </source>
</reference>
<reference key="11">
    <citation type="journal article" date="2020" name="Cell. Microbiol.">
        <title>A processing product of the Plasmodium falciparum reticulocyte binding protein RH1 shows a close association with AMA1 during junction formation.</title>
        <authorList>
            <person name="Gunalan K."/>
            <person name="Gao X."/>
            <person name="Yap S.S.L."/>
            <person name="Lai S.K."/>
            <person name="Ravasio A."/>
            <person name="Ganesan S."/>
            <person name="Li H.Y."/>
            <person name="Preiser P.R."/>
        </authorList>
    </citation>
    <scope>INTERACTION WITH AMA1</scope>
    <scope>SUBCELLULAR LOCATION</scope>
    <scope>PROTEOLYTIC CLEAVAGE</scope>
    <source>
        <strain evidence="12">T994</strain>
    </source>
</reference>
<proteinExistence type="evidence at protein level"/>
<protein>
    <recommendedName>
        <fullName evidence="14">Reticulocyte-binding protein homolog 1</fullName>
        <shortName evidence="14">PfRH1</shortName>
    </recommendedName>
    <alternativeName>
        <fullName evidence="13">Normocyte-binding protein 1</fullName>
        <shortName evidence="13">PfNBP1</shortName>
    </alternativeName>
    <component>
        <recommendedName>
            <fullName evidence="15">Reticulocyte-binding protein homolog 1 240 kDa form</fullName>
        </recommendedName>
    </component>
    <component>
        <recommendedName>
            <fullName evidence="15">Reticulocyte-binding protein homolog 1 120 kDa form</fullName>
        </recommendedName>
    </component>
</protein>
<keyword id="KW-0965">Cell junction</keyword>
<keyword id="KW-1003">Cell membrane</keyword>
<keyword id="KW-0968">Cytoplasmic vesicle</keyword>
<keyword id="KW-0325">Glycoprotein</keyword>
<keyword id="KW-0433">Leucine-rich repeat</keyword>
<keyword id="KW-0472">Membrane</keyword>
<keyword id="KW-0477">Merozoite</keyword>
<keyword id="KW-0675">Receptor</keyword>
<keyword id="KW-1185">Reference proteome</keyword>
<keyword id="KW-0677">Repeat</keyword>
<keyword id="KW-0964">Secreted</keyword>
<keyword id="KW-0732">Signal</keyword>
<keyword id="KW-0796">Tight junction</keyword>
<keyword id="KW-0812">Transmembrane</keyword>
<keyword id="KW-1133">Transmembrane helix</keyword>